<keyword id="KW-0025">Alternative splicing</keyword>
<keyword id="KW-1048">Host nucleus</keyword>
<keyword id="KW-0472">Membrane</keyword>
<keyword id="KW-0694">RNA-binding</keyword>
<keyword id="KW-0468">Viral matrix protein</keyword>
<keyword id="KW-0946">Virion</keyword>
<accession>P36347</accession>
<accession>Q0A2L3</accession>
<organism>
    <name type="scientific">Influenza A virus (strain A/Chicken/Brescia/1902 H7N7)</name>
    <dbReference type="NCBI Taxonomy" id="36418"/>
    <lineage>
        <taxon>Viruses</taxon>
        <taxon>Riboviria</taxon>
        <taxon>Orthornavirae</taxon>
        <taxon>Negarnaviricota</taxon>
        <taxon>Polyploviricotina</taxon>
        <taxon>Insthoviricetes</taxon>
        <taxon>Articulavirales</taxon>
        <taxon>Orthomyxoviridae</taxon>
        <taxon>Alphainfluenzavirus</taxon>
        <taxon>Alphainfluenzavirus influenzae</taxon>
        <taxon>Influenza A virus</taxon>
    </lineage>
</organism>
<evidence type="ECO:0000255" key="1">
    <source>
        <dbReference type="HAMAP-Rule" id="MF_04068"/>
    </source>
</evidence>
<dbReference type="EMBL" id="L37795">
    <property type="protein sequence ID" value="AAA56804.1"/>
    <property type="molecule type" value="Genomic_RNA"/>
</dbReference>
<dbReference type="EMBL" id="CY015054">
    <property type="protein sequence ID" value="ABI85068.1"/>
    <property type="molecule type" value="Genomic_RNA"/>
</dbReference>
<dbReference type="PIR" id="B45539">
    <property type="entry name" value="B45539"/>
</dbReference>
<dbReference type="SMR" id="P36347"/>
<dbReference type="Proteomes" id="UP000160986">
    <property type="component" value="Genome"/>
</dbReference>
<dbReference type="GO" id="GO:0042025">
    <property type="term" value="C:host cell nucleus"/>
    <property type="evidence" value="ECO:0007669"/>
    <property type="project" value="UniProtKB-SubCell"/>
</dbReference>
<dbReference type="GO" id="GO:0016020">
    <property type="term" value="C:membrane"/>
    <property type="evidence" value="ECO:0007669"/>
    <property type="project" value="UniProtKB-KW"/>
</dbReference>
<dbReference type="GO" id="GO:0055036">
    <property type="term" value="C:virion membrane"/>
    <property type="evidence" value="ECO:0007669"/>
    <property type="project" value="UniProtKB-SubCell"/>
</dbReference>
<dbReference type="GO" id="GO:0003723">
    <property type="term" value="F:RNA binding"/>
    <property type="evidence" value="ECO:0007669"/>
    <property type="project" value="UniProtKB-UniRule"/>
</dbReference>
<dbReference type="GO" id="GO:0039660">
    <property type="term" value="F:structural constituent of virion"/>
    <property type="evidence" value="ECO:0007669"/>
    <property type="project" value="UniProtKB-UniRule"/>
</dbReference>
<dbReference type="GO" id="GO:0046761">
    <property type="term" value="P:viral budding from plasma membrane"/>
    <property type="evidence" value="ECO:0007669"/>
    <property type="project" value="UniProtKB-UniRule"/>
</dbReference>
<dbReference type="FunFam" id="1.10.10.180:FF:000001">
    <property type="entry name" value="Matrix protein 1"/>
    <property type="match status" value="1"/>
</dbReference>
<dbReference type="FunFam" id="1.20.91.10:FF:000001">
    <property type="entry name" value="Matrix protein 1"/>
    <property type="match status" value="1"/>
</dbReference>
<dbReference type="Gene3D" id="1.10.10.180">
    <property type="match status" value="1"/>
</dbReference>
<dbReference type="Gene3D" id="1.20.91.10">
    <property type="match status" value="1"/>
</dbReference>
<dbReference type="HAMAP" id="MF_04068">
    <property type="entry name" value="INFV_M1"/>
    <property type="match status" value="1"/>
</dbReference>
<dbReference type="InterPro" id="IPR036039">
    <property type="entry name" value="Flu_matrix_M1"/>
</dbReference>
<dbReference type="InterPro" id="IPR013188">
    <property type="entry name" value="Flu_matrix_M1_C"/>
</dbReference>
<dbReference type="InterPro" id="IPR001561">
    <property type="entry name" value="Flu_matrix_M1_N"/>
</dbReference>
<dbReference type="InterPro" id="IPR015423">
    <property type="entry name" value="Flu_matrix_M1_N_sub1"/>
</dbReference>
<dbReference type="InterPro" id="IPR015799">
    <property type="entry name" value="Flu_matrix_M1_N_sub2"/>
</dbReference>
<dbReference type="InterPro" id="IPR037533">
    <property type="entry name" value="INFV_M1"/>
</dbReference>
<dbReference type="Pfam" id="PF00598">
    <property type="entry name" value="Flu_M1"/>
    <property type="match status" value="1"/>
</dbReference>
<dbReference type="Pfam" id="PF08289">
    <property type="entry name" value="Flu_M1_C"/>
    <property type="match status" value="1"/>
</dbReference>
<dbReference type="SMART" id="SM00759">
    <property type="entry name" value="Flu_M1_C"/>
    <property type="match status" value="1"/>
</dbReference>
<dbReference type="SUPFAM" id="SSF48145">
    <property type="entry name" value="Influenza virus matrix protein M1"/>
    <property type="match status" value="1"/>
</dbReference>
<gene>
    <name evidence="1" type="primary">M</name>
</gene>
<name>M1_I02A0</name>
<feature type="chain" id="PRO_0000078853" description="Matrix protein 1">
    <location>
        <begin position="1"/>
        <end position="252"/>
    </location>
</feature>
<feature type="region of interest" description="Membrane-binding" evidence="1">
    <location>
        <begin position="1"/>
        <end position="164"/>
    </location>
</feature>
<feature type="region of interest" description="RNP-binding" evidence="1">
    <location>
        <begin position="165"/>
        <end position="252"/>
    </location>
</feature>
<feature type="short sequence motif" description="Nuclear localization signal" evidence="1">
    <location>
        <begin position="101"/>
        <end position="105"/>
    </location>
</feature>
<feature type="sequence conflict" description="In Ref. 1; AAA56804." ref="1">
    <original>V</original>
    <variation>L</variation>
    <location>
        <position position="15"/>
    </location>
</feature>
<feature type="sequence conflict" description="In Ref. 1; AAA56804." ref="1">
    <original>K</original>
    <variation>M</variation>
    <location>
        <position position="98"/>
    </location>
</feature>
<feature type="sequence conflict" description="In Ref. 1; AAA56804." ref="1">
    <original>G</original>
    <variation>R</variation>
    <location>
        <position position="111"/>
    </location>
</feature>
<feature type="sequence conflict" description="In Ref. 1; AAA56804." ref="1">
    <original>T</original>
    <variation>A</variation>
    <location>
        <position position="182"/>
    </location>
</feature>
<comment type="function">
    <text evidence="1">Plays critical roles in virus replication, from virus entry and uncoating to assembly and budding of the virus particle. M1 binding to ribonucleocapsids (RNPs) in nucleus seems to inhibit viral transcription. Interaction of viral NEP with M1-RNP is thought to promote nuclear export of the complex, which is targeted to the virion assembly site at the apical plasma membrane in polarized epithelial cells. Interactions with NA and HA may bring M1, a non-raft-associated protein, into lipid rafts. Forms a continuous shell on the inner side of the lipid bilayer in virion, where it binds the RNP. During virus entry into cell, the M2 ion channel acidifies the internal virion core, inducing M1 dissociation from the RNP. M1-free RNPs are transported to the nucleus, where viral transcription and replication can take place.</text>
</comment>
<comment type="function">
    <text evidence="1">Determines the virion's shape: spherical or filamentous. Clinical isolates of influenza are characterized by the presence of significant proportion of filamentous virions, whereas after multiple passage on eggs or cell culture, virions have only spherical morphology. Filamentous virions are thought to be important to infect neighboring cells, and spherical virions more suited to spread through aerosol between hosts organisms.</text>
</comment>
<comment type="subunit">
    <text evidence="1">Homodimer and homomultimer. Interacts with NEP. Binds ribonucleocapsid by both interacting with genomic RNA and NP protein. May interact with HA and NA. Cannot bind NP without genomic RNA.</text>
</comment>
<comment type="subcellular location">
    <subcellularLocation>
        <location evidence="1">Virion membrane</location>
        <topology evidence="1">Peripheral membrane protein</topology>
        <orientation evidence="1">Cytoplasmic side</orientation>
    </subcellularLocation>
    <subcellularLocation>
        <location evidence="1">Host nucleus</location>
    </subcellularLocation>
</comment>
<comment type="alternative products">
    <event type="alternative splicing"/>
    <isoform>
        <id>P36347-1</id>
        <name>M1</name>
        <sequence type="displayed"/>
    </isoform>
    <isoform>
        <id>P36348-1</id>
        <name>M2</name>
        <sequence type="external"/>
    </isoform>
    <text>Only the first 9 residues are shared by the 2 isoforms.</text>
</comment>
<comment type="miscellaneous">
    <text evidence="1">Most abundant protein in virion. When expressed alone can form virus-like particles in transfected cells.</text>
</comment>
<comment type="similarity">
    <text evidence="1">Belongs to the influenza viruses Matrix protein M1 family.</text>
</comment>
<sequence>MSLLTEVETYVLSIVPSGPLKAEIAQRLEDVFAGKNTDLEALMEWLKTRPILSPLTKGILGFVFTLTVPSERGLQRRRFVQNALNGNGDPNNMDRAVKLYKKLKREITFHGAKEVALSYSTGALASCMGLIYNRMGTVTTEVALGLVCATCEQIADSQHRSHRQMVTTTNPLIRHENRMVLTSTTAKAMEQMAGSSEQAAEAMEVASQARQMVQAMRTIGTHPSSSAGLKDDLLENLQAYQKRMGVQMQRFK</sequence>
<proteinExistence type="inferred from homology"/>
<organismHost>
    <name type="scientific">Aves</name>
    <dbReference type="NCBI Taxonomy" id="8782"/>
</organismHost>
<organismHost>
    <name type="scientific">Equus caballus</name>
    <name type="common">Horse</name>
    <dbReference type="NCBI Taxonomy" id="9796"/>
</organismHost>
<organismHost>
    <name type="scientific">Homo sapiens</name>
    <name type="common">Human</name>
    <dbReference type="NCBI Taxonomy" id="9606"/>
</organismHost>
<organismHost>
    <name type="scientific">Phocidae</name>
    <name type="common">true seals</name>
    <dbReference type="NCBI Taxonomy" id="9709"/>
</organismHost>
<protein>
    <recommendedName>
        <fullName evidence="1">Matrix protein 1</fullName>
        <shortName evidence="1">M1</shortName>
    </recommendedName>
</protein>
<reference key="1">
    <citation type="journal article" date="1992" name="Arch. Virol.">
        <title>Subtype H7 influenza viruses: comparative antigenic and molecular analysis of the HA-, M-, and NS-genes.</title>
        <authorList>
            <person name="Klimov A."/>
            <person name="Proesch S."/>
            <person name="Schaefer J."/>
            <person name="Bucher D."/>
        </authorList>
    </citation>
    <scope>NUCLEOTIDE SEQUENCE [GENOMIC RNA]</scope>
</reference>
<reference key="2">
    <citation type="journal article" date="2006" name="Science">
        <title>Large-scale sequence analysis of avian influenza isolates.</title>
        <authorList>
            <person name="Obenauer J.C."/>
            <person name="Denson J."/>
            <person name="Mehta P.K."/>
            <person name="Su X."/>
            <person name="Mukatira S."/>
            <person name="Finkelstein D.B."/>
            <person name="Xu X."/>
            <person name="Wang J."/>
            <person name="Ma J."/>
            <person name="Fan Y."/>
            <person name="Rakestraw K.M."/>
            <person name="Webster R.G."/>
            <person name="Hoffmann E."/>
            <person name="Krauss S."/>
            <person name="Zheng J."/>
            <person name="Zhang Z."/>
            <person name="Naeve C.W."/>
        </authorList>
    </citation>
    <scope>NUCLEOTIDE SEQUENCE [GENOMIC RNA]</scope>
</reference>